<keyword id="KW-0027">Amidation</keyword>
<keyword id="KW-0878">Amphibian defense peptide</keyword>
<keyword id="KW-0044">Antibiotic</keyword>
<keyword id="KW-0929">Antimicrobial</keyword>
<keyword id="KW-0165">Cleavage on pair of basic residues</keyword>
<keyword id="KW-0295">Fungicide</keyword>
<keyword id="KW-0582">Pharmaceutical</keyword>
<keyword id="KW-0964">Secreted</keyword>
<keyword id="KW-0732">Signal</keyword>
<comment type="function">
    <molecule>Bombinin-like peptide 7</molecule>
    <text evidence="2 3 4">Antimicrobial peptide with activity against Gram-positive and -negative bacteria and fungi (PubMed:22439858, PubMed:32540219). Shows activity against P.acnes (MIC=5 uM), E.coli (MIC=5-6.3 uM), S.aureus (MIC=5-6.3 uM), M.luteus, S.cerevisiae and C.albicans (MIC=10-12.5 uM) (PubMed:22439858, PubMed:28636781, PubMed:32540219). Also reduces the production of interleukin (IL)-8 and granulocyte-macrophage colony stimulating factor (CSF2) in normal human epidermal keratinocytes (NHEKs) (PubMed:32540219). Shows anticancer activity against three human hepatoma cell lines (PubMed:28636781). In vivo, using the rat ear edema model, suppress P.acnes-induced skin inflammation, significantly reducing the ear thickness (PubMed:32540219). Shows weak hemolytic activity against human erythrocytes (PubMed:28636781).</text>
</comment>
<comment type="function">
    <molecule>Bombinin H-BO</molecule>
    <text evidence="3">Shows weak antimicrobial activity (tested on E.coli, S.aureus and C.albicans) (PubMed:28636781). Shows high hemolytic activity against human erythrocytes (38% erythrocyte lysis at 80.0 uM, and up to 85% at 159.7 uM) (PubMed:28636781).</text>
</comment>
<comment type="biophysicochemical properties">
    <molecule>Bombinin-like peptide 7</molecule>
    <phDependence>
        <text evidence="4">Stable from pH 3.0 to 12.0.</text>
    </phDependence>
    <temperatureDependence>
        <text evidence="4">Highly thermostable, when continuously exposed at the temperatures ranging from 20 to 100 degrees Celsius for 30 minutes.</text>
    </temperatureDependence>
</comment>
<comment type="subcellular location">
    <subcellularLocation>
        <location evidence="8">Secreted</location>
    </subcellularLocation>
</comment>
<comment type="tissue specificity">
    <text evidence="8">Expressed by the skin glands.</text>
</comment>
<comment type="mass spectrometry">
    <molecule>Bombinin-like peptide 7</molecule>
</comment>
<comment type="mass spectrometry">
    <molecule>Bombinin H-BO</molecule>
</comment>
<comment type="pharmaceutical">
    <molecule>Bombinin-like peptide 7</molecule>
    <text evidence="8">Could be used as a potential agent in the treatment against acne, since it shows antibacterial activity against P.acnes and it both reduces the production of pro-inflammatory cytokines and the skin inflammation induced by P.acnes in rat ear edema model.</text>
</comment>
<comment type="miscellaneous">
    <text evidence="6">BLP-7 is also encoded by another gene from the same species (AC Q9DET7).</text>
</comment>
<comment type="similarity">
    <text evidence="6">Belongs to the bombinin family.</text>
</comment>
<comment type="online information" name="The antimicrobial peptide database">
    <link uri="https://wangapd3.com/database/query_output.php?ID=00054"/>
</comment>
<sequence>MNFKYIIAVSFLIASTYARSVKNDEQSLSQRDVLDEESLREIRGIGGALLSAGKSALKGLAKGLAEHFANGKRTAEEHEVMKRLEAVMRDLDSLDHPEEASEKETRGFNQEEIANLFTKKEKRIIGPVLGLIGKALGGLLG</sequence>
<proteinExistence type="evidence at protein level"/>
<organism>
    <name type="scientific">Bombina orientalis</name>
    <name type="common">Oriental fire-bellied toad</name>
    <dbReference type="NCBI Taxonomy" id="8346"/>
    <lineage>
        <taxon>Eukaryota</taxon>
        <taxon>Metazoa</taxon>
        <taxon>Chordata</taxon>
        <taxon>Craniata</taxon>
        <taxon>Vertebrata</taxon>
        <taxon>Euteleostomi</taxon>
        <taxon>Amphibia</taxon>
        <taxon>Batrachia</taxon>
        <taxon>Anura</taxon>
        <taxon>Bombinatoridae</taxon>
        <taxon>Bombina</taxon>
    </lineage>
</organism>
<accession>A0A219CM62</accession>
<reference key="1">
    <citation type="journal article" date="2018" name="Chem. Biol. Drug Des.">
        <title>Discovery of two bombinin peptides with antimicrobial and anticancer activities from the skin secretion of Oriental fire-bellied toad, Bombina orientalis.</title>
        <authorList>
            <person name="Zhou C."/>
            <person name="Wang Z."/>
            <person name="Peng X."/>
            <person name="Liu Y."/>
            <person name="Lin Y."/>
            <person name="Zhang Z."/>
            <person name="Qiu Y."/>
            <person name="Jin M."/>
            <person name="Wang R."/>
            <person name="Kong D."/>
        </authorList>
    </citation>
    <scope>NUCLEOTIDE SEQUENCE [MRNA]</scope>
    <scope>FUNCTION</scope>
    <scope>SYNTHESIS OF 44-70 AND 124-140</scope>
    <scope>AMIDATION AT ASN-70 AND LEU-140</scope>
    <scope>MASS SPECTROMETRY</scope>
    <source>
        <tissue>Skin secretion</tissue>
    </source>
</reference>
<reference key="2">
    <citation type="journal article" date="2012" name="BMC Biotechnol.">
        <title>A novel PCR-based method for high throughput prokaryotic expression of antimicrobial peptide genes.</title>
        <authorList>
            <person name="Ke T."/>
            <person name="Liang S."/>
            <person name="Huang J."/>
            <person name="Mao H."/>
            <person name="Chen J."/>
            <person name="Dong C."/>
            <person name="Huang J."/>
            <person name="Liu S."/>
            <person name="Kang J."/>
            <person name="Liu D."/>
            <person name="Ma X."/>
        </authorList>
    </citation>
    <scope>FUNCTION</scope>
</reference>
<reference key="3">
    <citation type="journal article" date="2020" name="Toxicon">
        <title>Inhibitory effect of the antimicrobial peptide BLP-7 against Propionibacterium acnes and its anti-inflammatory effect on acne vulgaris.</title>
        <authorList>
            <person name="Wu Y."/>
            <person name="Qiang Y."/>
            <person name="Cao K."/>
            <person name="Zhang W."/>
            <person name="Zhang G."/>
        </authorList>
    </citation>
    <scope>FUNCTION</scope>
    <scope>SYNTHESIS OF 44-70</scope>
    <scope>BIOPHYSICOCHEMICAL PROPERTIES</scope>
    <scope>PHARMACEUTICAL</scope>
</reference>
<evidence type="ECO:0000255" key="1"/>
<evidence type="ECO:0000269" key="2">
    <source>
    </source>
</evidence>
<evidence type="ECO:0000269" key="3">
    <source>
    </source>
</evidence>
<evidence type="ECO:0000269" key="4">
    <source>
    </source>
</evidence>
<evidence type="ECO:0000303" key="5">
    <source>
    </source>
</evidence>
<evidence type="ECO:0000305" key="6"/>
<evidence type="ECO:0000305" key="7">
    <source>
    </source>
</evidence>
<evidence type="ECO:0000305" key="8">
    <source>
    </source>
</evidence>
<dbReference type="EMBL" id="LT732574">
    <property type="protein sequence ID" value="SJN60136.1"/>
    <property type="molecule type" value="Genomic_DNA"/>
</dbReference>
<dbReference type="SMR" id="A0A219CM62"/>
<dbReference type="GO" id="GO:0005576">
    <property type="term" value="C:extracellular region"/>
    <property type="evidence" value="ECO:0007669"/>
    <property type="project" value="UniProtKB-SubCell"/>
</dbReference>
<dbReference type="GO" id="GO:0042742">
    <property type="term" value="P:defense response to bacterium"/>
    <property type="evidence" value="ECO:0007669"/>
    <property type="project" value="UniProtKB-KW"/>
</dbReference>
<dbReference type="GO" id="GO:0050832">
    <property type="term" value="P:defense response to fungus"/>
    <property type="evidence" value="ECO:0007669"/>
    <property type="project" value="UniProtKB-KW"/>
</dbReference>
<dbReference type="GO" id="GO:0031640">
    <property type="term" value="P:killing of cells of another organism"/>
    <property type="evidence" value="ECO:0007669"/>
    <property type="project" value="UniProtKB-KW"/>
</dbReference>
<dbReference type="InterPro" id="IPR007962">
    <property type="entry name" value="Bombinin"/>
</dbReference>
<dbReference type="Pfam" id="PF05298">
    <property type="entry name" value="Bombinin"/>
    <property type="match status" value="1"/>
</dbReference>
<name>BMN7O_BOMOR</name>
<feature type="signal peptide" evidence="1">
    <location>
        <begin position="1"/>
        <end position="18"/>
    </location>
</feature>
<feature type="propeptide" id="PRO_0000451085" evidence="7">
    <location>
        <begin position="19"/>
        <end position="43"/>
    </location>
</feature>
<feature type="peptide" id="PRO_5011967929" description="Bombinin-like peptide 7" evidence="3">
    <location>
        <begin position="44"/>
        <end position="70"/>
    </location>
</feature>
<feature type="propeptide" id="PRO_0000451086" evidence="7">
    <location>
        <begin position="74"/>
        <end position="123"/>
    </location>
</feature>
<feature type="peptide" id="PRO_0000451087" description="Bombinin H-BO" evidence="3">
    <location>
        <begin position="124"/>
        <end position="140"/>
    </location>
</feature>
<feature type="modified residue" description="Asparagine amide" evidence="3">
    <location>
        <position position="70"/>
    </location>
</feature>
<feature type="modified residue" description="Leucine amide" evidence="3">
    <location>
        <position position="140"/>
    </location>
</feature>
<protein>
    <recommendedName>
        <fullName evidence="6">Bombinins BLP-7/H-BO</fullName>
    </recommendedName>
    <component>
        <recommendedName>
            <fullName evidence="5">Bombinin-like peptide 7</fullName>
            <shortName evidence="5">BLP-7</shortName>
        </recommendedName>
    </component>
    <component>
        <recommendedName>
            <fullName evidence="5">Bombinin H-BO</fullName>
        </recommendedName>
    </component>
</protein>